<protein>
    <recommendedName>
        <fullName evidence="1">Peptide chain release factor 2</fullName>
        <shortName evidence="1">RF-2</shortName>
    </recommendedName>
</protein>
<comment type="function">
    <text evidence="1">Peptide chain release factor 2 directs the termination of translation in response to the peptide chain termination codons UGA and UAA.</text>
</comment>
<comment type="subcellular location">
    <subcellularLocation>
        <location evidence="1">Cytoplasm</location>
    </subcellularLocation>
</comment>
<comment type="PTM">
    <text evidence="1">Methylated by PrmC. Methylation increases the termination efficiency of RF2.</text>
</comment>
<comment type="similarity">
    <text evidence="1">Belongs to the prokaryotic/mitochondrial release factor family.</text>
</comment>
<name>RF2_THEP1</name>
<keyword id="KW-0963">Cytoplasm</keyword>
<keyword id="KW-0488">Methylation</keyword>
<keyword id="KW-0648">Protein biosynthesis</keyword>
<accession>A5IM04</accession>
<dbReference type="EMBL" id="CP000702">
    <property type="protein sequence ID" value="ABQ47227.1"/>
    <property type="molecule type" value="Genomic_DNA"/>
</dbReference>
<dbReference type="RefSeq" id="WP_011943729.1">
    <property type="nucleotide sequence ID" value="NC_009486.1"/>
</dbReference>
<dbReference type="SMR" id="A5IM04"/>
<dbReference type="STRING" id="390874.Tpet_1213"/>
<dbReference type="KEGG" id="tpt:Tpet_1213"/>
<dbReference type="eggNOG" id="COG1186">
    <property type="taxonomic scope" value="Bacteria"/>
</dbReference>
<dbReference type="HOGENOM" id="CLU_036856_6_0_0"/>
<dbReference type="Proteomes" id="UP000006558">
    <property type="component" value="Chromosome"/>
</dbReference>
<dbReference type="GO" id="GO:0005737">
    <property type="term" value="C:cytoplasm"/>
    <property type="evidence" value="ECO:0007669"/>
    <property type="project" value="UniProtKB-SubCell"/>
</dbReference>
<dbReference type="GO" id="GO:0016149">
    <property type="term" value="F:translation release factor activity, codon specific"/>
    <property type="evidence" value="ECO:0007669"/>
    <property type="project" value="UniProtKB-UniRule"/>
</dbReference>
<dbReference type="FunFam" id="3.30.160.20:FF:000010">
    <property type="entry name" value="Peptide chain release factor 2"/>
    <property type="match status" value="1"/>
</dbReference>
<dbReference type="Gene3D" id="3.30.160.20">
    <property type="match status" value="1"/>
</dbReference>
<dbReference type="Gene3D" id="3.30.70.1660">
    <property type="match status" value="1"/>
</dbReference>
<dbReference type="Gene3D" id="1.20.58.410">
    <property type="entry name" value="Release factor"/>
    <property type="match status" value="1"/>
</dbReference>
<dbReference type="HAMAP" id="MF_00094">
    <property type="entry name" value="Rel_fac_2"/>
    <property type="match status" value="1"/>
</dbReference>
<dbReference type="InterPro" id="IPR005139">
    <property type="entry name" value="PCRF"/>
</dbReference>
<dbReference type="InterPro" id="IPR000352">
    <property type="entry name" value="Pep_chain_release_fac_I"/>
</dbReference>
<dbReference type="InterPro" id="IPR045853">
    <property type="entry name" value="Pep_chain_release_fac_I_sf"/>
</dbReference>
<dbReference type="InterPro" id="IPR004374">
    <property type="entry name" value="PrfB"/>
</dbReference>
<dbReference type="NCBIfam" id="TIGR00020">
    <property type="entry name" value="prfB"/>
    <property type="match status" value="1"/>
</dbReference>
<dbReference type="PANTHER" id="PTHR43116:SF3">
    <property type="entry name" value="CLASS I PEPTIDE CHAIN RELEASE FACTOR"/>
    <property type="match status" value="1"/>
</dbReference>
<dbReference type="PANTHER" id="PTHR43116">
    <property type="entry name" value="PEPTIDE CHAIN RELEASE FACTOR 2"/>
    <property type="match status" value="1"/>
</dbReference>
<dbReference type="Pfam" id="PF03462">
    <property type="entry name" value="PCRF"/>
    <property type="match status" value="1"/>
</dbReference>
<dbReference type="Pfam" id="PF00472">
    <property type="entry name" value="RF-1"/>
    <property type="match status" value="1"/>
</dbReference>
<dbReference type="SMART" id="SM00937">
    <property type="entry name" value="PCRF"/>
    <property type="match status" value="1"/>
</dbReference>
<dbReference type="SUPFAM" id="SSF75620">
    <property type="entry name" value="Release factor"/>
    <property type="match status" value="1"/>
</dbReference>
<dbReference type="PROSITE" id="PS00745">
    <property type="entry name" value="RF_PROK_I"/>
    <property type="match status" value="1"/>
</dbReference>
<feature type="chain" id="PRO_1000005019" description="Peptide chain release factor 2">
    <location>
        <begin position="1"/>
        <end position="367"/>
    </location>
</feature>
<feature type="modified residue" description="N5-methylglutamine" evidence="1">
    <location>
        <position position="249"/>
    </location>
</feature>
<evidence type="ECO:0000255" key="1">
    <source>
        <dbReference type="HAMAP-Rule" id="MF_00094"/>
    </source>
</evidence>
<gene>
    <name evidence="1" type="primary">prfB</name>
    <name type="ordered locus">Tpet_1213</name>
</gene>
<reference key="1">
    <citation type="submission" date="2007-05" db="EMBL/GenBank/DDBJ databases">
        <title>Complete sequence of Thermotoga petrophila RKU-1.</title>
        <authorList>
            <consortium name="US DOE Joint Genome Institute"/>
            <person name="Copeland A."/>
            <person name="Lucas S."/>
            <person name="Lapidus A."/>
            <person name="Barry K."/>
            <person name="Glavina del Rio T."/>
            <person name="Dalin E."/>
            <person name="Tice H."/>
            <person name="Pitluck S."/>
            <person name="Sims D."/>
            <person name="Brettin T."/>
            <person name="Bruce D."/>
            <person name="Detter J.C."/>
            <person name="Han C."/>
            <person name="Tapia R."/>
            <person name="Schmutz J."/>
            <person name="Larimer F."/>
            <person name="Land M."/>
            <person name="Hauser L."/>
            <person name="Kyrpides N."/>
            <person name="Mikhailova N."/>
            <person name="Nelson K."/>
            <person name="Gogarten J.P."/>
            <person name="Noll K."/>
            <person name="Richardson P."/>
        </authorList>
    </citation>
    <scope>NUCLEOTIDE SEQUENCE [LARGE SCALE GENOMIC DNA]</scope>
    <source>
        <strain>ATCC BAA-488 / DSM 13995 / JCM 10881 / RKU-1</strain>
    </source>
</reference>
<organism>
    <name type="scientific">Thermotoga petrophila (strain ATCC BAA-488 / DSM 13995 / JCM 10881 / RKU-1)</name>
    <dbReference type="NCBI Taxonomy" id="390874"/>
    <lineage>
        <taxon>Bacteria</taxon>
        <taxon>Thermotogati</taxon>
        <taxon>Thermotogota</taxon>
        <taxon>Thermotogae</taxon>
        <taxon>Thermotogales</taxon>
        <taxon>Thermotogaceae</taxon>
        <taxon>Thermotoga</taxon>
    </lineage>
</organism>
<sequence length="367" mass="42493">MISFETRTRMEELEKKYKDILSVVNENEVDREIEEIEKKLTDPSVWDDQKKAREYTQKLKRLKNISEDLKRVRSLFEDLEVAIELSDEDQEMAQHVEEIVQELEGAVKKLELEIILNGKYDPNNAYLSVHPGAGGTESQDWAQMLLRMYMRWAERKGFDVEIVEFQPGEEAGIKDATILIKGEYAYGYLKHESGVHRLVRISPFDAARRRHTSFASVNVIPEIDDDVDIEIRPEDLKIETFRASGHGGQYVNKTESAVRITHLPTGIVVSCQNERSQHQNKQTALKILKAKLYQLEMEKKQREIQEIQGELKDISWGNQIRSYVFHPYTMVKDHRTGVETANVDAVMDGDIDMFIEAELVYFARRSG</sequence>
<proteinExistence type="inferred from homology"/>